<organism>
    <name type="scientific">Shigella flexneri</name>
    <dbReference type="NCBI Taxonomy" id="623"/>
    <lineage>
        <taxon>Bacteria</taxon>
        <taxon>Pseudomonadati</taxon>
        <taxon>Pseudomonadota</taxon>
        <taxon>Gammaproteobacteria</taxon>
        <taxon>Enterobacterales</taxon>
        <taxon>Enterobacteriaceae</taxon>
        <taxon>Shigella</taxon>
    </lineage>
</organism>
<gene>
    <name type="primary">yqaA</name>
    <name type="ordered locus">SF2716</name>
    <name type="ordered locus">S2903</name>
</gene>
<name>YQAA_SHIFL</name>
<protein>
    <recommendedName>
        <fullName>Inner membrane protein YqaA</fullName>
    </recommendedName>
</protein>
<accession>P0ADR1</accession>
<accession>P76631</accession>
<accession>P77028</accession>
<proteinExistence type="inferred from homology"/>
<reference key="1">
    <citation type="journal article" date="2002" name="Nucleic Acids Res.">
        <title>Genome sequence of Shigella flexneri 2a: insights into pathogenicity through comparison with genomes of Escherichia coli K12 and O157.</title>
        <authorList>
            <person name="Jin Q."/>
            <person name="Yuan Z."/>
            <person name="Xu J."/>
            <person name="Wang Y."/>
            <person name="Shen Y."/>
            <person name="Lu W."/>
            <person name="Wang J."/>
            <person name="Liu H."/>
            <person name="Yang J."/>
            <person name="Yang F."/>
            <person name="Zhang X."/>
            <person name="Zhang J."/>
            <person name="Yang G."/>
            <person name="Wu H."/>
            <person name="Qu D."/>
            <person name="Dong J."/>
            <person name="Sun L."/>
            <person name="Xue Y."/>
            <person name="Zhao A."/>
            <person name="Gao Y."/>
            <person name="Zhu J."/>
            <person name="Kan B."/>
            <person name="Ding K."/>
            <person name="Chen S."/>
            <person name="Cheng H."/>
            <person name="Yao Z."/>
            <person name="He B."/>
            <person name="Chen R."/>
            <person name="Ma D."/>
            <person name="Qiang B."/>
            <person name="Wen Y."/>
            <person name="Hou Y."/>
            <person name="Yu J."/>
        </authorList>
    </citation>
    <scope>NUCLEOTIDE SEQUENCE [LARGE SCALE GENOMIC DNA]</scope>
    <source>
        <strain>301 / Serotype 2a</strain>
    </source>
</reference>
<reference key="2">
    <citation type="journal article" date="2003" name="Infect. Immun.">
        <title>Complete genome sequence and comparative genomics of Shigella flexneri serotype 2a strain 2457T.</title>
        <authorList>
            <person name="Wei J."/>
            <person name="Goldberg M.B."/>
            <person name="Burland V."/>
            <person name="Venkatesan M.M."/>
            <person name="Deng W."/>
            <person name="Fournier G."/>
            <person name="Mayhew G.F."/>
            <person name="Plunkett G. III"/>
            <person name="Rose D.J."/>
            <person name="Darling A."/>
            <person name="Mau B."/>
            <person name="Perna N.T."/>
            <person name="Payne S.M."/>
            <person name="Runyen-Janecky L.J."/>
            <person name="Zhou S."/>
            <person name="Schwartz D.C."/>
            <person name="Blattner F.R."/>
        </authorList>
    </citation>
    <scope>NUCLEOTIDE SEQUENCE [LARGE SCALE GENOMIC DNA]</scope>
    <source>
        <strain>ATCC 700930 / 2457T / Serotype 2a</strain>
    </source>
</reference>
<dbReference type="EMBL" id="AE005674">
    <property type="protein sequence ID" value="AAN44208.1"/>
    <property type="molecule type" value="Genomic_DNA"/>
</dbReference>
<dbReference type="EMBL" id="AE014073">
    <property type="protein sequence ID" value="AAP18035.1"/>
    <property type="molecule type" value="Genomic_DNA"/>
</dbReference>
<dbReference type="RefSeq" id="NP_708501.1">
    <property type="nucleotide sequence ID" value="NC_004337.2"/>
</dbReference>
<dbReference type="RefSeq" id="WP_001287454.1">
    <property type="nucleotide sequence ID" value="NZ_WPGW01000014.1"/>
</dbReference>
<dbReference type="STRING" id="198214.SF2716"/>
<dbReference type="PaxDb" id="198214-SF2716"/>
<dbReference type="GeneID" id="1025717"/>
<dbReference type="KEGG" id="sfl:SF2716"/>
<dbReference type="KEGG" id="sfx:S2903"/>
<dbReference type="PATRIC" id="fig|198214.7.peg.3236"/>
<dbReference type="HOGENOM" id="CLU_125997_0_0_6"/>
<dbReference type="Proteomes" id="UP000001006">
    <property type="component" value="Chromosome"/>
</dbReference>
<dbReference type="Proteomes" id="UP000002673">
    <property type="component" value="Chromosome"/>
</dbReference>
<dbReference type="GO" id="GO:0005886">
    <property type="term" value="C:plasma membrane"/>
    <property type="evidence" value="ECO:0007669"/>
    <property type="project" value="UniProtKB-SubCell"/>
</dbReference>
<dbReference type="InterPro" id="IPR051311">
    <property type="entry name" value="DedA_domain"/>
</dbReference>
<dbReference type="InterPro" id="IPR032816">
    <property type="entry name" value="VTT_dom"/>
</dbReference>
<dbReference type="PANTHER" id="PTHR42709">
    <property type="entry name" value="ALKALINE PHOSPHATASE LIKE PROTEIN"/>
    <property type="match status" value="1"/>
</dbReference>
<dbReference type="PANTHER" id="PTHR42709:SF4">
    <property type="entry name" value="INNER MEMBRANE PROTEIN YQAA"/>
    <property type="match status" value="1"/>
</dbReference>
<dbReference type="Pfam" id="PF09335">
    <property type="entry name" value="VTT_dom"/>
    <property type="match status" value="1"/>
</dbReference>
<evidence type="ECO:0000250" key="1"/>
<evidence type="ECO:0000255" key="2"/>
<evidence type="ECO:0000305" key="3"/>
<sequence length="142" mass="15590">MSEALSLFSLFASSFLSATLLPGNSEVVLVAMLLSGISHPWVLVLTATMGNSLGGLTNVILGRFFPLRKTSRWQEKATGWLKRYGAVTLLLSWMPVVGDLLCLLAGWMRISWGPVIFFLCLGKALRYVAVAAATVQGMMWWH</sequence>
<comment type="subcellular location">
    <subcellularLocation>
        <location evidence="1">Cell inner membrane</location>
        <topology evidence="1">Multi-pass membrane protein</topology>
    </subcellularLocation>
</comment>
<comment type="similarity">
    <text evidence="3">To H.influenzae HI_0489.</text>
</comment>
<keyword id="KW-0997">Cell inner membrane</keyword>
<keyword id="KW-1003">Cell membrane</keyword>
<keyword id="KW-0472">Membrane</keyword>
<keyword id="KW-1185">Reference proteome</keyword>
<keyword id="KW-0812">Transmembrane</keyword>
<keyword id="KW-1133">Transmembrane helix</keyword>
<feature type="chain" id="PRO_0000169307" description="Inner membrane protein YqaA">
    <location>
        <begin position="1"/>
        <end position="142"/>
    </location>
</feature>
<feature type="topological domain" description="Cytoplasmic" evidence="2">
    <location>
        <begin position="1"/>
        <end position="2"/>
    </location>
</feature>
<feature type="transmembrane region" description="Helical" evidence="2">
    <location>
        <begin position="3"/>
        <end position="23"/>
    </location>
</feature>
<feature type="topological domain" description="Periplasmic" evidence="2">
    <location>
        <begin position="24"/>
        <end position="26"/>
    </location>
</feature>
<feature type="transmembrane region" description="Helical" evidence="2">
    <location>
        <begin position="27"/>
        <end position="47"/>
    </location>
</feature>
<feature type="topological domain" description="Cytoplasmic" evidence="2">
    <location>
        <begin position="48"/>
        <end position="86"/>
    </location>
</feature>
<feature type="transmembrane region" description="Helical" evidence="2">
    <location>
        <begin position="87"/>
        <end position="107"/>
    </location>
</feature>
<feature type="topological domain" description="Periplasmic" evidence="2">
    <location>
        <begin position="108"/>
        <end position="142"/>
    </location>
</feature>